<sequence length="248" mass="28193">MAARKNAGVLALFDVDGTLTAPRKVVTPEMLQFMKQLREHVTVGVVGGSDLVKISEQLGKSVTTDYDYCFSENGLVAHKNGELIGTQSLKSFLGDDQLKEFINFTLHYIADLDIPIKRGTFIEFRSGMLNVSPIGRNCSQEERDEFEKYDKVHNIRPKMVSVLREKFAHLNLTFSIGGQISFDVFPQGWDKTYCLRYLEEFQEIHFFGDKTYKGGNDYEIFESDRTIGHTVTSPDDTAEQCRSLFMSK</sequence>
<organism>
    <name type="scientific">Oryza sativa subsp. japonica</name>
    <name type="common">Rice</name>
    <dbReference type="NCBI Taxonomy" id="39947"/>
    <lineage>
        <taxon>Eukaryota</taxon>
        <taxon>Viridiplantae</taxon>
        <taxon>Streptophyta</taxon>
        <taxon>Embryophyta</taxon>
        <taxon>Tracheophyta</taxon>
        <taxon>Spermatophyta</taxon>
        <taxon>Magnoliopsida</taxon>
        <taxon>Liliopsida</taxon>
        <taxon>Poales</taxon>
        <taxon>Poaceae</taxon>
        <taxon>BOP clade</taxon>
        <taxon>Oryzoideae</taxon>
        <taxon>Oryzeae</taxon>
        <taxon>Oryzinae</taxon>
        <taxon>Oryza</taxon>
        <taxon>Oryza sativa</taxon>
    </lineage>
</organism>
<evidence type="ECO:0000250" key="1">
    <source>
        <dbReference type="UniProtKB" id="A0A0U1WZ18"/>
    </source>
</evidence>
<evidence type="ECO:0000250" key="2">
    <source>
        <dbReference type="UniProtKB" id="P31353"/>
    </source>
</evidence>
<evidence type="ECO:0000250" key="3">
    <source>
        <dbReference type="UniProtKB" id="Q92871"/>
    </source>
</evidence>
<evidence type="ECO:0000269" key="4">
    <source>
    </source>
</evidence>
<evidence type="ECO:0000269" key="5">
    <source>
    </source>
</evidence>
<evidence type="ECO:0000303" key="6">
    <source>
    </source>
</evidence>
<evidence type="ECO:0000305" key="7"/>
<evidence type="ECO:0000305" key="8">
    <source>
    </source>
</evidence>
<evidence type="ECO:0000312" key="9">
    <source>
        <dbReference type="EMBL" id="BAS91688.1"/>
    </source>
</evidence>
<evidence type="ECO:0000312" key="10">
    <source>
        <dbReference type="EMBL" id="CAE03433.2"/>
    </source>
</evidence>
<evidence type="ECO:0000312" key="11">
    <source>
        <dbReference type="EMBL" id="EAZ32454.1"/>
    </source>
</evidence>
<keyword id="KW-0963">Cytoplasm</keyword>
<keyword id="KW-0413">Isomerase</keyword>
<keyword id="KW-0460">Magnesium</keyword>
<keyword id="KW-0479">Metal-binding</keyword>
<keyword id="KW-1185">Reference proteome</keyword>
<dbReference type="EC" id="5.4.2.8" evidence="5"/>
<dbReference type="EMBL" id="DQ442992">
    <property type="protein sequence ID" value="ABD97871.1"/>
    <property type="molecule type" value="mRNA"/>
</dbReference>
<dbReference type="EMBL" id="AL606641">
    <property type="protein sequence ID" value="CAE03433.2"/>
    <property type="molecule type" value="Genomic_DNA"/>
</dbReference>
<dbReference type="EMBL" id="AP008210">
    <property type="protein sequence ID" value="BAF16209.1"/>
    <property type="molecule type" value="Genomic_DNA"/>
</dbReference>
<dbReference type="EMBL" id="AP014960">
    <property type="protein sequence ID" value="BAS91688.1"/>
    <property type="molecule type" value="Genomic_DNA"/>
</dbReference>
<dbReference type="EMBL" id="CM000141">
    <property type="protein sequence ID" value="EAZ32454.1"/>
    <property type="molecule type" value="Genomic_DNA"/>
</dbReference>
<dbReference type="EMBL" id="AK061384">
    <property type="protein sequence ID" value="BAG87893.1"/>
    <property type="molecule type" value="mRNA"/>
</dbReference>
<dbReference type="EMBL" id="AK104004">
    <property type="protein sequence ID" value="BAG96367.1"/>
    <property type="molecule type" value="mRNA"/>
</dbReference>
<dbReference type="RefSeq" id="XP_015633714.1">
    <property type="nucleotide sequence ID" value="XM_015778228.1"/>
</dbReference>
<dbReference type="SMR" id="Q7XPW5"/>
<dbReference type="FunCoup" id="Q7XPW5">
    <property type="interactions" value="3133"/>
</dbReference>
<dbReference type="STRING" id="39947.Q7XPW5"/>
<dbReference type="PaxDb" id="39947-Q7XPW5"/>
<dbReference type="EnsemblPlants" id="Os04t0682300-01">
    <property type="protein sequence ID" value="Os04t0682300-01"/>
    <property type="gene ID" value="Os04g0682300"/>
</dbReference>
<dbReference type="EnsemblPlants" id="Os04t0682300-02">
    <property type="protein sequence ID" value="Os04t0682300-02"/>
    <property type="gene ID" value="Os04g0682300"/>
</dbReference>
<dbReference type="Gramene" id="Os04t0682300-01">
    <property type="protein sequence ID" value="Os04t0682300-01"/>
    <property type="gene ID" value="Os04g0682300"/>
</dbReference>
<dbReference type="Gramene" id="Os04t0682300-02">
    <property type="protein sequence ID" value="Os04t0682300-02"/>
    <property type="gene ID" value="Os04g0682300"/>
</dbReference>
<dbReference type="KEGG" id="dosa:Os04g0682300"/>
<dbReference type="eggNOG" id="KOG3189">
    <property type="taxonomic scope" value="Eukaryota"/>
</dbReference>
<dbReference type="HOGENOM" id="CLU_065642_0_1_1"/>
<dbReference type="InParanoid" id="Q7XPW5"/>
<dbReference type="OMA" id="ISHRVYT"/>
<dbReference type="OrthoDB" id="10264771at2759"/>
<dbReference type="PlantReactome" id="R-OSA-1119410">
    <property type="pathway name" value="Ascorbate biosynthesis"/>
</dbReference>
<dbReference type="PlantReactome" id="R-OSA-1119628">
    <property type="pathway name" value="GDP-mannose metabolism"/>
</dbReference>
<dbReference type="UniPathway" id="UPA00126">
    <property type="reaction ID" value="UER00424"/>
</dbReference>
<dbReference type="Proteomes" id="UP000000763">
    <property type="component" value="Chromosome 4"/>
</dbReference>
<dbReference type="Proteomes" id="UP000007752">
    <property type="component" value="Chromosome 4"/>
</dbReference>
<dbReference type="Proteomes" id="UP000059680">
    <property type="component" value="Chromosome 4"/>
</dbReference>
<dbReference type="ExpressionAtlas" id="Q7XPW5">
    <property type="expression patterns" value="baseline and differential"/>
</dbReference>
<dbReference type="GO" id="GO:0005829">
    <property type="term" value="C:cytosol"/>
    <property type="evidence" value="ECO:0000318"/>
    <property type="project" value="GO_Central"/>
</dbReference>
<dbReference type="GO" id="GO:0046872">
    <property type="term" value="F:metal ion binding"/>
    <property type="evidence" value="ECO:0007669"/>
    <property type="project" value="UniProtKB-KW"/>
</dbReference>
<dbReference type="GO" id="GO:0004615">
    <property type="term" value="F:phosphomannomutase activity"/>
    <property type="evidence" value="ECO:0000318"/>
    <property type="project" value="GO_Central"/>
</dbReference>
<dbReference type="GO" id="GO:0009298">
    <property type="term" value="P:GDP-mannose biosynthetic process"/>
    <property type="evidence" value="ECO:0007669"/>
    <property type="project" value="UniProtKB-UniPathway"/>
</dbReference>
<dbReference type="GO" id="GO:0006013">
    <property type="term" value="P:mannose metabolic process"/>
    <property type="evidence" value="ECO:0000318"/>
    <property type="project" value="GO_Central"/>
</dbReference>
<dbReference type="GO" id="GO:0006487">
    <property type="term" value="P:protein N-linked glycosylation"/>
    <property type="evidence" value="ECO:0000318"/>
    <property type="project" value="GO_Central"/>
</dbReference>
<dbReference type="CDD" id="cd02585">
    <property type="entry name" value="HAD_PMM"/>
    <property type="match status" value="1"/>
</dbReference>
<dbReference type="FunFam" id="3.30.1240.20:FF:000001">
    <property type="entry name" value="Phosphomannomutase"/>
    <property type="match status" value="1"/>
</dbReference>
<dbReference type="Gene3D" id="3.30.1240.20">
    <property type="match status" value="1"/>
</dbReference>
<dbReference type="Gene3D" id="3.40.50.1000">
    <property type="entry name" value="HAD superfamily/HAD-like"/>
    <property type="match status" value="1"/>
</dbReference>
<dbReference type="InterPro" id="IPR036412">
    <property type="entry name" value="HAD-like_sf"/>
</dbReference>
<dbReference type="InterPro" id="IPR006379">
    <property type="entry name" value="HAD-SF_hydro_IIB"/>
</dbReference>
<dbReference type="InterPro" id="IPR023214">
    <property type="entry name" value="HAD_sf"/>
</dbReference>
<dbReference type="InterPro" id="IPR005002">
    <property type="entry name" value="PMM"/>
</dbReference>
<dbReference type="InterPro" id="IPR043169">
    <property type="entry name" value="PMM_cap"/>
</dbReference>
<dbReference type="NCBIfam" id="TIGR01484">
    <property type="entry name" value="HAD-SF-IIB"/>
    <property type="match status" value="1"/>
</dbReference>
<dbReference type="PANTHER" id="PTHR10466">
    <property type="entry name" value="PHOSPHOMANNOMUTASE"/>
    <property type="match status" value="1"/>
</dbReference>
<dbReference type="PANTHER" id="PTHR10466:SF0">
    <property type="entry name" value="PHOSPHOMANNOMUTASE"/>
    <property type="match status" value="1"/>
</dbReference>
<dbReference type="Pfam" id="PF03332">
    <property type="entry name" value="PMM"/>
    <property type="match status" value="1"/>
</dbReference>
<dbReference type="SFLD" id="SFLDF00445">
    <property type="entry name" value="alpha-phosphomannomutase"/>
    <property type="match status" value="1"/>
</dbReference>
<dbReference type="SFLD" id="SFLDG01140">
    <property type="entry name" value="C2.B:_Phosphomannomutase_and_P"/>
    <property type="match status" value="1"/>
</dbReference>
<dbReference type="SUPFAM" id="SSF56784">
    <property type="entry name" value="HAD-like"/>
    <property type="match status" value="1"/>
</dbReference>
<feature type="chain" id="PRO_0000326493" description="Phosphomannomutase">
    <location>
        <begin position="1"/>
        <end position="248"/>
    </location>
</feature>
<feature type="active site" description="Nucleophile" evidence="3">
    <location>
        <position position="14"/>
    </location>
</feature>
<feature type="active site" description="Proton donor/acceptor" evidence="3">
    <location>
        <position position="16"/>
    </location>
</feature>
<feature type="binding site" evidence="3">
    <location>
        <position position="14"/>
    </location>
    <ligand>
        <name>Mg(2+)</name>
        <dbReference type="ChEBI" id="CHEBI:18420"/>
        <label>1</label>
    </ligand>
</feature>
<feature type="binding site" evidence="3">
    <location>
        <position position="16"/>
    </location>
    <ligand>
        <name>Mg(2+)</name>
        <dbReference type="ChEBI" id="CHEBI:18420"/>
        <label>1</label>
    </ligand>
</feature>
<feature type="binding site" evidence="3">
    <location>
        <position position="23"/>
    </location>
    <ligand>
        <name>alpha-D-mannose 1-phosphate</name>
        <dbReference type="ChEBI" id="CHEBI:58409"/>
    </ligand>
</feature>
<feature type="binding site" evidence="3">
    <location>
        <position position="125"/>
    </location>
    <ligand>
        <name>alpha-D-mannose 1-phosphate</name>
        <dbReference type="ChEBI" id="CHEBI:58409"/>
    </ligand>
</feature>
<feature type="binding site" evidence="3">
    <location>
        <position position="136"/>
    </location>
    <ligand>
        <name>alpha-D-mannose 1-phosphate</name>
        <dbReference type="ChEBI" id="CHEBI:58409"/>
    </ligand>
</feature>
<feature type="binding site" evidence="3">
    <location>
        <position position="143"/>
    </location>
    <ligand>
        <name>alpha-D-mannose 1-phosphate</name>
        <dbReference type="ChEBI" id="CHEBI:58409"/>
    </ligand>
</feature>
<feature type="binding site" evidence="3">
    <location>
        <position position="181"/>
    </location>
    <ligand>
        <name>alpha-D-mannose 1-phosphate</name>
        <dbReference type="ChEBI" id="CHEBI:58409"/>
    </ligand>
</feature>
<feature type="binding site" evidence="3">
    <location>
        <position position="183"/>
    </location>
    <ligand>
        <name>alpha-D-mannose 1-phosphate</name>
        <dbReference type="ChEBI" id="CHEBI:58409"/>
    </ligand>
</feature>
<feature type="binding site" evidence="2">
    <location>
        <position position="209"/>
    </location>
    <ligand>
        <name>Mg(2+)</name>
        <dbReference type="ChEBI" id="CHEBI:18420"/>
        <label>1</label>
    </ligand>
</feature>
<feature type="binding site" evidence="3">
    <location>
        <position position="221"/>
    </location>
    <ligand>
        <name>Mg(2+)</name>
        <dbReference type="ChEBI" id="CHEBI:18420"/>
        <label>2</label>
    </ligand>
</feature>
<feature type="binding site" evidence="3">
    <location>
        <position position="226"/>
    </location>
    <ligand>
        <name>Mg(2+)</name>
        <dbReference type="ChEBI" id="CHEBI:18420"/>
        <label>2</label>
    </ligand>
</feature>
<comment type="function">
    <text evidence="4 5 7 8">Catalyzes the interconversion of mannose-6-phosphate to mannose-1-phosphate, the precursor for the synthesis of GDP-mannose (Probable) (PubMed:20920368). GDP-mannose is an essential sugar nucleotide for the synthesis of D-mannose-containing cell wall polysaccharides (galactomannans and glucomannans), glycolipids, glycoproteins and the antioxidant L-ascorbate (Probable). Can complement the yeast temperature-sensitive mutant sec53-6 (PubMed:17217471).</text>
</comment>
<comment type="catalytic activity">
    <reaction evidence="5">
        <text>alpha-D-mannose 1-phosphate = D-mannose 6-phosphate</text>
        <dbReference type="Rhea" id="RHEA:11140"/>
        <dbReference type="ChEBI" id="CHEBI:58409"/>
        <dbReference type="ChEBI" id="CHEBI:58735"/>
        <dbReference type="EC" id="5.4.2.8"/>
    </reaction>
</comment>
<comment type="cofactor">
    <cofactor evidence="3">
        <name>Mg(2+)</name>
        <dbReference type="ChEBI" id="CHEBI:18420"/>
    </cofactor>
</comment>
<comment type="pathway">
    <text evidence="7">Nucleotide-sugar biosynthesis; GDP-alpha-D-mannose biosynthesis; alpha-D-mannose 1-phosphate from D-fructose 6-phosphate: step 2/2.</text>
</comment>
<comment type="subunit">
    <text evidence="3">Homodimer.</text>
</comment>
<comment type="subcellular location">
    <subcellularLocation>
        <location evidence="1">Cytoplasm</location>
    </subcellularLocation>
</comment>
<comment type="similarity">
    <text evidence="7">Belongs to the eukaryotic PMM family.</text>
</comment>
<reference key="1">
    <citation type="journal article" date="2007" name="Plant J.">
        <title>Molecular and functional analysis of phosphomannomutase (PMM) from higher plants and genetic evidence for the involvement of PMM in ascorbic acid biosynthesis in Arabidopsis and Nicotiana benthamiana.</title>
        <authorList>
            <person name="Qian W."/>
            <person name="Yu C."/>
            <person name="Qin H."/>
            <person name="Liu X."/>
            <person name="Zhang A."/>
            <person name="Johansen I.E."/>
            <person name="Wang D."/>
        </authorList>
    </citation>
    <scope>NUCLEOTIDE SEQUENCE [MRNA]</scope>
    <scope>FUNCTION</scope>
</reference>
<reference key="2">
    <citation type="journal article" date="2002" name="Nature">
        <title>Sequence and analysis of rice chromosome 4.</title>
        <authorList>
            <person name="Feng Q."/>
            <person name="Zhang Y."/>
            <person name="Hao P."/>
            <person name="Wang S."/>
            <person name="Fu G."/>
            <person name="Huang Y."/>
            <person name="Li Y."/>
            <person name="Zhu J."/>
            <person name="Liu Y."/>
            <person name="Hu X."/>
            <person name="Jia P."/>
            <person name="Zhang Y."/>
            <person name="Zhao Q."/>
            <person name="Ying K."/>
            <person name="Yu S."/>
            <person name="Tang Y."/>
            <person name="Weng Q."/>
            <person name="Zhang L."/>
            <person name="Lu Y."/>
            <person name="Mu J."/>
            <person name="Lu Y."/>
            <person name="Zhang L.S."/>
            <person name="Yu Z."/>
            <person name="Fan D."/>
            <person name="Liu X."/>
            <person name="Lu T."/>
            <person name="Li C."/>
            <person name="Wu Y."/>
            <person name="Sun T."/>
            <person name="Lei H."/>
            <person name="Li T."/>
            <person name="Hu H."/>
            <person name="Guan J."/>
            <person name="Wu M."/>
            <person name="Zhang R."/>
            <person name="Zhou B."/>
            <person name="Chen Z."/>
            <person name="Chen L."/>
            <person name="Jin Z."/>
            <person name="Wang R."/>
            <person name="Yin H."/>
            <person name="Cai Z."/>
            <person name="Ren S."/>
            <person name="Lv G."/>
            <person name="Gu W."/>
            <person name="Zhu G."/>
            <person name="Tu Y."/>
            <person name="Jia J."/>
            <person name="Zhang Y."/>
            <person name="Chen J."/>
            <person name="Kang H."/>
            <person name="Chen X."/>
            <person name="Shao C."/>
            <person name="Sun Y."/>
            <person name="Hu Q."/>
            <person name="Zhang X."/>
            <person name="Zhang W."/>
            <person name="Wang L."/>
            <person name="Ding C."/>
            <person name="Sheng H."/>
            <person name="Gu J."/>
            <person name="Chen S."/>
            <person name="Ni L."/>
            <person name="Zhu F."/>
            <person name="Chen W."/>
            <person name="Lan L."/>
            <person name="Lai Y."/>
            <person name="Cheng Z."/>
            <person name="Gu M."/>
            <person name="Jiang J."/>
            <person name="Li J."/>
            <person name="Hong G."/>
            <person name="Xue Y."/>
            <person name="Han B."/>
        </authorList>
    </citation>
    <scope>NUCLEOTIDE SEQUENCE [LARGE SCALE GENOMIC DNA]</scope>
    <source>
        <strain>cv. Nipponbare</strain>
    </source>
</reference>
<reference key="3">
    <citation type="journal article" date="2005" name="Nature">
        <title>The map-based sequence of the rice genome.</title>
        <authorList>
            <consortium name="International rice genome sequencing project (IRGSP)"/>
        </authorList>
    </citation>
    <scope>NUCLEOTIDE SEQUENCE [LARGE SCALE GENOMIC DNA]</scope>
    <source>
        <strain>cv. Nipponbare</strain>
    </source>
</reference>
<reference key="4">
    <citation type="journal article" date="2008" name="Nucleic Acids Res.">
        <title>The rice annotation project database (RAP-DB): 2008 update.</title>
        <authorList>
            <consortium name="The rice annotation project (RAP)"/>
        </authorList>
    </citation>
    <scope>GENOME REANNOTATION</scope>
    <source>
        <strain>cv. Nipponbare</strain>
    </source>
</reference>
<reference key="5">
    <citation type="journal article" date="2013" name="Rice">
        <title>Improvement of the Oryza sativa Nipponbare reference genome using next generation sequence and optical map data.</title>
        <authorList>
            <person name="Kawahara Y."/>
            <person name="de la Bastide M."/>
            <person name="Hamilton J.P."/>
            <person name="Kanamori H."/>
            <person name="McCombie W.R."/>
            <person name="Ouyang S."/>
            <person name="Schwartz D.C."/>
            <person name="Tanaka T."/>
            <person name="Wu J."/>
            <person name="Zhou S."/>
            <person name="Childs K.L."/>
            <person name="Davidson R.M."/>
            <person name="Lin H."/>
            <person name="Quesada-Ocampo L."/>
            <person name="Vaillancourt B."/>
            <person name="Sakai H."/>
            <person name="Lee S.S."/>
            <person name="Kim J."/>
            <person name="Numa H."/>
            <person name="Itoh T."/>
            <person name="Buell C.R."/>
            <person name="Matsumoto T."/>
        </authorList>
    </citation>
    <scope>GENOME REANNOTATION</scope>
    <source>
        <strain>cv. Nipponbare</strain>
    </source>
</reference>
<reference key="6">
    <citation type="journal article" date="2005" name="PLoS Biol.">
        <title>The genomes of Oryza sativa: a history of duplications.</title>
        <authorList>
            <person name="Yu J."/>
            <person name="Wang J."/>
            <person name="Lin W."/>
            <person name="Li S."/>
            <person name="Li H."/>
            <person name="Zhou J."/>
            <person name="Ni P."/>
            <person name="Dong W."/>
            <person name="Hu S."/>
            <person name="Zeng C."/>
            <person name="Zhang J."/>
            <person name="Zhang Y."/>
            <person name="Li R."/>
            <person name="Xu Z."/>
            <person name="Li S."/>
            <person name="Li X."/>
            <person name="Zheng H."/>
            <person name="Cong L."/>
            <person name="Lin L."/>
            <person name="Yin J."/>
            <person name="Geng J."/>
            <person name="Li G."/>
            <person name="Shi J."/>
            <person name="Liu J."/>
            <person name="Lv H."/>
            <person name="Li J."/>
            <person name="Wang J."/>
            <person name="Deng Y."/>
            <person name="Ran L."/>
            <person name="Shi X."/>
            <person name="Wang X."/>
            <person name="Wu Q."/>
            <person name="Li C."/>
            <person name="Ren X."/>
            <person name="Wang J."/>
            <person name="Wang X."/>
            <person name="Li D."/>
            <person name="Liu D."/>
            <person name="Zhang X."/>
            <person name="Ji Z."/>
            <person name="Zhao W."/>
            <person name="Sun Y."/>
            <person name="Zhang Z."/>
            <person name="Bao J."/>
            <person name="Han Y."/>
            <person name="Dong L."/>
            <person name="Ji J."/>
            <person name="Chen P."/>
            <person name="Wu S."/>
            <person name="Liu J."/>
            <person name="Xiao Y."/>
            <person name="Bu D."/>
            <person name="Tan J."/>
            <person name="Yang L."/>
            <person name="Ye C."/>
            <person name="Zhang J."/>
            <person name="Xu J."/>
            <person name="Zhou Y."/>
            <person name="Yu Y."/>
            <person name="Zhang B."/>
            <person name="Zhuang S."/>
            <person name="Wei H."/>
            <person name="Liu B."/>
            <person name="Lei M."/>
            <person name="Yu H."/>
            <person name="Li Y."/>
            <person name="Xu H."/>
            <person name="Wei S."/>
            <person name="He X."/>
            <person name="Fang L."/>
            <person name="Zhang Z."/>
            <person name="Zhang Y."/>
            <person name="Huang X."/>
            <person name="Su Z."/>
            <person name="Tong W."/>
            <person name="Li J."/>
            <person name="Tong Z."/>
            <person name="Li S."/>
            <person name="Ye J."/>
            <person name="Wang L."/>
            <person name="Fang L."/>
            <person name="Lei T."/>
            <person name="Chen C.-S."/>
            <person name="Chen H.-C."/>
            <person name="Xu Z."/>
            <person name="Li H."/>
            <person name="Huang H."/>
            <person name="Zhang F."/>
            <person name="Xu H."/>
            <person name="Li N."/>
            <person name="Zhao C."/>
            <person name="Li S."/>
            <person name="Dong L."/>
            <person name="Huang Y."/>
            <person name="Li L."/>
            <person name="Xi Y."/>
            <person name="Qi Q."/>
            <person name="Li W."/>
            <person name="Zhang B."/>
            <person name="Hu W."/>
            <person name="Zhang Y."/>
            <person name="Tian X."/>
            <person name="Jiao Y."/>
            <person name="Liang X."/>
            <person name="Jin J."/>
            <person name="Gao L."/>
            <person name="Zheng W."/>
            <person name="Hao B."/>
            <person name="Liu S.-M."/>
            <person name="Wang W."/>
            <person name="Yuan L."/>
            <person name="Cao M."/>
            <person name="McDermott J."/>
            <person name="Samudrala R."/>
            <person name="Wang J."/>
            <person name="Wong G.K.-S."/>
            <person name="Yang H."/>
        </authorList>
    </citation>
    <scope>NUCLEOTIDE SEQUENCE [LARGE SCALE GENOMIC DNA]</scope>
    <source>
        <strain>cv. Nipponbare</strain>
    </source>
</reference>
<reference key="7">
    <citation type="journal article" date="2003" name="Science">
        <title>Collection, mapping, and annotation of over 28,000 cDNA clones from japonica rice.</title>
        <authorList>
            <consortium name="The rice full-length cDNA consortium"/>
        </authorList>
    </citation>
    <scope>NUCLEOTIDE SEQUENCE [LARGE SCALE MRNA]</scope>
    <source>
        <strain>cv. Nipponbare</strain>
    </source>
</reference>
<reference key="8">
    <citation type="journal article" date="2010" name="BMC Plant Biol.">
        <title>Molecular analysis of phosphomannomutase (PMM) genes reveals a unique PMM duplication event in diverse Triticeae species and the main PMM isozymes in bread wheat tissues.</title>
        <authorList>
            <person name="Yu C."/>
            <person name="Li Y."/>
            <person name="Li B."/>
            <person name="Liu X."/>
            <person name="Hao L."/>
            <person name="Chen J."/>
            <person name="Qian W."/>
            <person name="Li S."/>
            <person name="Wang G."/>
            <person name="Bai S."/>
            <person name="Ye H."/>
            <person name="Qin H."/>
            <person name="Shen Q."/>
            <person name="Chen L."/>
            <person name="Zhang A."/>
            <person name="Wang D."/>
        </authorList>
    </citation>
    <scope>FUNCTION</scope>
    <scope>CATALYTIC ACTIVITY</scope>
</reference>
<name>PMM_ORYSJ</name>
<gene>
    <name evidence="6" type="primary">PMM</name>
    <name evidence="9" type="ordered locus">Os04g0682300</name>
    <name evidence="7" type="ordered locus">LOC_Os04g58580</name>
    <name evidence="11" type="ORF">OsJ_015937</name>
    <name evidence="10" type="ORF">OSJNBa0032F06.16</name>
</gene>
<protein>
    <recommendedName>
        <fullName evidence="6">Phosphomannomutase</fullName>
        <shortName evidence="6">OsPMM</shortName>
        <ecNumber evidence="5">5.4.2.8</ecNumber>
    </recommendedName>
</protein>
<accession>Q7XPW5</accession>
<accession>B7E696</accession>
<proteinExistence type="evidence at protein level"/>